<organism>
    <name type="scientific">Schizosaccharomyces pombe (strain 972 / ATCC 24843)</name>
    <name type="common">Fission yeast</name>
    <dbReference type="NCBI Taxonomy" id="284812"/>
    <lineage>
        <taxon>Eukaryota</taxon>
        <taxon>Fungi</taxon>
        <taxon>Dikarya</taxon>
        <taxon>Ascomycota</taxon>
        <taxon>Taphrinomycotina</taxon>
        <taxon>Schizosaccharomycetes</taxon>
        <taxon>Schizosaccharomycetales</taxon>
        <taxon>Schizosaccharomycetaceae</taxon>
        <taxon>Schizosaccharomyces</taxon>
    </lineage>
</organism>
<sequence>MYLSKIICKKVPMKLLCTRNAATVSAAATNALQKEQPSGEAMIARPRLVDLDKRWGIMSQEEKDGLITDLYARQKQPWTTLSIEEKKAAYWIAFGEHGPRAFSHISQKTVFWGTVAGLTIGVVLFGLIRTQAAPSPRTMTREWQEKSNEYMKENKINPISGEASEGFKGRGQISGGIFSPSEKDKK</sequence>
<evidence type="ECO:0000250" key="1">
    <source>
        <dbReference type="UniProtKB" id="P00424"/>
    </source>
</evidence>
<evidence type="ECO:0000255" key="2"/>
<evidence type="ECO:0000256" key="3">
    <source>
        <dbReference type="SAM" id="MobiDB-lite"/>
    </source>
</evidence>
<evidence type="ECO:0000269" key="4">
    <source>
    </source>
</evidence>
<evidence type="ECO:0000305" key="5"/>
<evidence type="ECO:0007829" key="6">
    <source>
        <dbReference type="PDB" id="8C8Q"/>
    </source>
</evidence>
<accession>O74988</accession>
<keyword id="KW-0002">3D-structure</keyword>
<keyword id="KW-0472">Membrane</keyword>
<keyword id="KW-0496">Mitochondrion</keyword>
<keyword id="KW-0999">Mitochondrion inner membrane</keyword>
<keyword id="KW-0560">Oxidoreductase</keyword>
<keyword id="KW-1185">Reference proteome</keyword>
<keyword id="KW-0809">Transit peptide</keyword>
<keyword id="KW-0812">Transmembrane</keyword>
<keyword id="KW-1133">Transmembrane helix</keyword>
<feature type="transit peptide" description="Mitochondrion" evidence="2">
    <location>
        <begin position="1"/>
        <end position="20"/>
    </location>
</feature>
<feature type="chain" id="PRO_0000006096" description="Cytochrome c oxidase polypeptide 5, mitochondrial">
    <location>
        <begin position="21"/>
        <end position="186"/>
    </location>
</feature>
<feature type="topological domain" description="Mitochondrial matrix" evidence="1">
    <location>
        <begin position="21"/>
        <end position="107"/>
    </location>
</feature>
<feature type="transmembrane region" description="Helical" evidence="2">
    <location>
        <begin position="108"/>
        <end position="128"/>
    </location>
</feature>
<feature type="topological domain" description="Mitochondrial intermembrane" evidence="1">
    <location>
        <begin position="129"/>
        <end position="186"/>
    </location>
</feature>
<feature type="region of interest" description="Disordered" evidence="3">
    <location>
        <begin position="149"/>
        <end position="186"/>
    </location>
</feature>
<feature type="helix" evidence="6">
    <location>
        <begin position="45"/>
        <end position="47"/>
    </location>
</feature>
<feature type="turn" evidence="6">
    <location>
        <begin position="48"/>
        <end position="50"/>
    </location>
</feature>
<feature type="helix" evidence="6">
    <location>
        <begin position="51"/>
        <end position="54"/>
    </location>
</feature>
<feature type="helix" evidence="6">
    <location>
        <begin position="60"/>
        <end position="73"/>
    </location>
</feature>
<feature type="helix" evidence="6">
    <location>
        <begin position="78"/>
        <end position="80"/>
    </location>
</feature>
<feature type="helix" evidence="6">
    <location>
        <begin position="83"/>
        <end position="93"/>
    </location>
</feature>
<feature type="helix" evidence="6">
    <location>
        <begin position="107"/>
        <end position="129"/>
    </location>
</feature>
<feature type="helix" evidence="6">
    <location>
        <begin position="141"/>
        <end position="153"/>
    </location>
</feature>
<feature type="turn" evidence="6">
    <location>
        <begin position="158"/>
        <end position="160"/>
    </location>
</feature>
<feature type="strand" evidence="6">
    <location>
        <begin position="164"/>
        <end position="166"/>
    </location>
</feature>
<feature type="helix" evidence="6">
    <location>
        <begin position="176"/>
        <end position="178"/>
    </location>
</feature>
<comment type="function">
    <text evidence="1">Component of the cytochrome c oxidase, the last enzyme in the mitochondrial electron transport chain which drives oxidative phosphorylation. The respiratory chain contains 3 multisubunit complexes succinate dehydrogenase (complex II, CII), ubiquinol-cytochrome c oxidoreductase (cytochrome b-c1 complex, complex III, CIII) and cytochrome c oxidase (complex IV, CIV), that cooperate to transfer electrons derived from NADH and succinate to molecular oxygen, creating an electrochemical gradient over the inner membrane that drives transmembrane transport and the ATP synthase. Cytochrome c oxidase is the component of the respiratory chain that catalyzes the reduction of oxygen to water. Electrons originating from reduced cytochrome c in the intermembrane space (IMS) are transferred via the dinuclear copper A center (CU(A)) of subunit 2 and heme A of subunit 1 to the active site in subunit 1, a binuclear center (BNC) formed by heme A3 and copper B (CU(B)). The BNC reduces molecular oxygen to 2 water molecules using 4 electrons from cytochrome c in the IMS and 4 protons from the mitochondrial matrix.</text>
</comment>
<comment type="pathway">
    <text evidence="1">Energy metabolism; oxidative phosphorylation.</text>
</comment>
<comment type="subunit">
    <text evidence="1">Component of the cytochrome c oxidase (complex IV, CIV), a multisubunit enzyme composed of a catalytic core of 3 subunits and seevral supernumerary subunits. The complex exists as a monomer or a dimer and forms supercomplexes (SCs) in the inner mitochondrial membrane with ubiquinol-cytochrome c oxidoreductase (cytochrome b-c1 complex, complex III, CIII).</text>
</comment>
<comment type="subcellular location">
    <subcellularLocation>
        <location evidence="4">Mitochondrion inner membrane</location>
        <topology evidence="1">Single-pass membrane protein</topology>
    </subcellularLocation>
</comment>
<comment type="similarity">
    <text evidence="5">Belongs to the cytochrome c oxidase IV family.</text>
</comment>
<name>COX5_SCHPO</name>
<reference key="1">
    <citation type="journal article" date="2002" name="Nature">
        <title>The genome sequence of Schizosaccharomyces pombe.</title>
        <authorList>
            <person name="Wood V."/>
            <person name="Gwilliam R."/>
            <person name="Rajandream M.A."/>
            <person name="Lyne M.H."/>
            <person name="Lyne R."/>
            <person name="Stewart A."/>
            <person name="Sgouros J.G."/>
            <person name="Peat N."/>
            <person name="Hayles J."/>
            <person name="Baker S.G."/>
            <person name="Basham D."/>
            <person name="Bowman S."/>
            <person name="Brooks K."/>
            <person name="Brown D."/>
            <person name="Brown S."/>
            <person name="Chillingworth T."/>
            <person name="Churcher C.M."/>
            <person name="Collins M."/>
            <person name="Connor R."/>
            <person name="Cronin A."/>
            <person name="Davis P."/>
            <person name="Feltwell T."/>
            <person name="Fraser A."/>
            <person name="Gentles S."/>
            <person name="Goble A."/>
            <person name="Hamlin N."/>
            <person name="Harris D.E."/>
            <person name="Hidalgo J."/>
            <person name="Hodgson G."/>
            <person name="Holroyd S."/>
            <person name="Hornsby T."/>
            <person name="Howarth S."/>
            <person name="Huckle E.J."/>
            <person name="Hunt S."/>
            <person name="Jagels K."/>
            <person name="James K.D."/>
            <person name="Jones L."/>
            <person name="Jones M."/>
            <person name="Leather S."/>
            <person name="McDonald S."/>
            <person name="McLean J."/>
            <person name="Mooney P."/>
            <person name="Moule S."/>
            <person name="Mungall K.L."/>
            <person name="Murphy L.D."/>
            <person name="Niblett D."/>
            <person name="Odell C."/>
            <person name="Oliver K."/>
            <person name="O'Neil S."/>
            <person name="Pearson D."/>
            <person name="Quail M.A."/>
            <person name="Rabbinowitsch E."/>
            <person name="Rutherford K.M."/>
            <person name="Rutter S."/>
            <person name="Saunders D."/>
            <person name="Seeger K."/>
            <person name="Sharp S."/>
            <person name="Skelton J."/>
            <person name="Simmonds M.N."/>
            <person name="Squares R."/>
            <person name="Squares S."/>
            <person name="Stevens K."/>
            <person name="Taylor K."/>
            <person name="Taylor R.G."/>
            <person name="Tivey A."/>
            <person name="Walsh S.V."/>
            <person name="Warren T."/>
            <person name="Whitehead S."/>
            <person name="Woodward J.R."/>
            <person name="Volckaert G."/>
            <person name="Aert R."/>
            <person name="Robben J."/>
            <person name="Grymonprez B."/>
            <person name="Weltjens I."/>
            <person name="Vanstreels E."/>
            <person name="Rieger M."/>
            <person name="Schaefer M."/>
            <person name="Mueller-Auer S."/>
            <person name="Gabel C."/>
            <person name="Fuchs M."/>
            <person name="Duesterhoeft A."/>
            <person name="Fritzc C."/>
            <person name="Holzer E."/>
            <person name="Moestl D."/>
            <person name="Hilbert H."/>
            <person name="Borzym K."/>
            <person name="Langer I."/>
            <person name="Beck A."/>
            <person name="Lehrach H."/>
            <person name="Reinhardt R."/>
            <person name="Pohl T.M."/>
            <person name="Eger P."/>
            <person name="Zimmermann W."/>
            <person name="Wedler H."/>
            <person name="Wambutt R."/>
            <person name="Purnelle B."/>
            <person name="Goffeau A."/>
            <person name="Cadieu E."/>
            <person name="Dreano S."/>
            <person name="Gloux S."/>
            <person name="Lelaure V."/>
            <person name="Mottier S."/>
            <person name="Galibert F."/>
            <person name="Aves S.J."/>
            <person name="Xiang Z."/>
            <person name="Hunt C."/>
            <person name="Moore K."/>
            <person name="Hurst S.M."/>
            <person name="Lucas M."/>
            <person name="Rochet M."/>
            <person name="Gaillardin C."/>
            <person name="Tallada V.A."/>
            <person name="Garzon A."/>
            <person name="Thode G."/>
            <person name="Daga R.R."/>
            <person name="Cruzado L."/>
            <person name="Jimenez J."/>
            <person name="Sanchez M."/>
            <person name="del Rey F."/>
            <person name="Benito J."/>
            <person name="Dominguez A."/>
            <person name="Revuelta J.L."/>
            <person name="Moreno S."/>
            <person name="Armstrong J."/>
            <person name="Forsburg S.L."/>
            <person name="Cerutti L."/>
            <person name="Lowe T."/>
            <person name="McCombie W.R."/>
            <person name="Paulsen I."/>
            <person name="Potashkin J."/>
            <person name="Shpakovski G.V."/>
            <person name="Ussery D."/>
            <person name="Barrell B.G."/>
            <person name="Nurse P."/>
        </authorList>
    </citation>
    <scope>NUCLEOTIDE SEQUENCE [LARGE SCALE GENOMIC DNA]</scope>
    <source>
        <strain>972 / ATCC 24843</strain>
    </source>
</reference>
<reference key="2">
    <citation type="journal article" date="2011" name="Science">
        <title>Comparative functional genomics of the fission yeasts.</title>
        <authorList>
            <person name="Rhind N."/>
            <person name="Chen Z."/>
            <person name="Yassour M."/>
            <person name="Thompson D.A."/>
            <person name="Haas B.J."/>
            <person name="Habib N."/>
            <person name="Wapinski I."/>
            <person name="Roy S."/>
            <person name="Lin M.F."/>
            <person name="Heiman D.I."/>
            <person name="Young S.K."/>
            <person name="Furuya K."/>
            <person name="Guo Y."/>
            <person name="Pidoux A."/>
            <person name="Chen H.M."/>
            <person name="Robbertse B."/>
            <person name="Goldberg J.M."/>
            <person name="Aoki K."/>
            <person name="Bayne E.H."/>
            <person name="Berlin A.M."/>
            <person name="Desjardins C.A."/>
            <person name="Dobbs E."/>
            <person name="Dukaj L."/>
            <person name="Fan L."/>
            <person name="FitzGerald M.G."/>
            <person name="French C."/>
            <person name="Gujja S."/>
            <person name="Hansen K."/>
            <person name="Keifenheim D."/>
            <person name="Levin J.Z."/>
            <person name="Mosher R.A."/>
            <person name="Mueller C.A."/>
            <person name="Pfiffner J."/>
            <person name="Priest M."/>
            <person name="Russ C."/>
            <person name="Smialowska A."/>
            <person name="Swoboda P."/>
            <person name="Sykes S.M."/>
            <person name="Vaughn M."/>
            <person name="Vengrova S."/>
            <person name="Yoder R."/>
            <person name="Zeng Q."/>
            <person name="Allshire R."/>
            <person name="Baulcombe D."/>
            <person name="Birren B.W."/>
            <person name="Brown W."/>
            <person name="Ekwall K."/>
            <person name="Kellis M."/>
            <person name="Leatherwood J."/>
            <person name="Levin H."/>
            <person name="Margalit H."/>
            <person name="Martienssen R."/>
            <person name="Nieduszynski C.A."/>
            <person name="Spatafora J.W."/>
            <person name="Friedman N."/>
            <person name="Dalgaard J.Z."/>
            <person name="Baumann P."/>
            <person name="Niki H."/>
            <person name="Regev A."/>
            <person name="Nusbaum C."/>
        </authorList>
    </citation>
    <scope>REVISION OF GENE MODEL</scope>
</reference>
<reference key="3">
    <citation type="journal article" date="2006" name="Nat. Biotechnol.">
        <title>ORFeome cloning and global analysis of protein localization in the fission yeast Schizosaccharomyces pombe.</title>
        <authorList>
            <person name="Matsuyama A."/>
            <person name="Arai R."/>
            <person name="Yashiroda Y."/>
            <person name="Shirai A."/>
            <person name="Kamata A."/>
            <person name="Sekido S."/>
            <person name="Kobayashi Y."/>
            <person name="Hashimoto A."/>
            <person name="Hamamoto M."/>
            <person name="Hiraoka Y."/>
            <person name="Horinouchi S."/>
            <person name="Yoshida M."/>
        </authorList>
    </citation>
    <scope>SUBCELLULAR LOCATION [LARGE SCALE ANALYSIS]</scope>
</reference>
<gene>
    <name type="primary">cox5</name>
    <name type="ORF">SPCC338.10c</name>
</gene>
<proteinExistence type="evidence at protein level"/>
<dbReference type="EMBL" id="CU329672">
    <property type="protein sequence ID" value="CAA19341.2"/>
    <property type="molecule type" value="Genomic_DNA"/>
</dbReference>
<dbReference type="PIR" id="T41733">
    <property type="entry name" value="T41733"/>
</dbReference>
<dbReference type="RefSeq" id="NP_588158.2">
    <property type="nucleotide sequence ID" value="NM_001023147.2"/>
</dbReference>
<dbReference type="PDB" id="8C8Q">
    <property type="method" value="EM"/>
    <property type="resolution" value="3.36 A"/>
    <property type="chains" value="E=1-186"/>
</dbReference>
<dbReference type="PDB" id="8Q1B">
    <property type="method" value="EM"/>
    <property type="resolution" value="3.40 A"/>
    <property type="chains" value="e=1-186"/>
</dbReference>
<dbReference type="PDBsum" id="8C8Q"/>
<dbReference type="PDBsum" id="8Q1B"/>
<dbReference type="EMDB" id="EMD-16491"/>
<dbReference type="EMDB" id="EMD-18062"/>
<dbReference type="SMR" id="O74988"/>
<dbReference type="BioGRID" id="275442">
    <property type="interactions" value="2"/>
</dbReference>
<dbReference type="ComplexPortal" id="CPX-9641">
    <property type="entry name" value="Mitochondrial respiratory chain complex IV"/>
</dbReference>
<dbReference type="FunCoup" id="O74988">
    <property type="interactions" value="97"/>
</dbReference>
<dbReference type="STRING" id="284812.O74988"/>
<dbReference type="iPTMnet" id="O74988"/>
<dbReference type="PaxDb" id="4896-SPCC338.10c.1"/>
<dbReference type="EnsemblFungi" id="SPCC338.10c.1">
    <property type="protein sequence ID" value="SPCC338.10c.1:pep"/>
    <property type="gene ID" value="SPCC338.10c"/>
</dbReference>
<dbReference type="GeneID" id="2538862"/>
<dbReference type="KEGG" id="spo:2538862"/>
<dbReference type="PomBase" id="SPCC338.10c">
    <property type="gene designation" value="cox5"/>
</dbReference>
<dbReference type="VEuPathDB" id="FungiDB:SPCC338.10c"/>
<dbReference type="eggNOG" id="KOG4075">
    <property type="taxonomic scope" value="Eukaryota"/>
</dbReference>
<dbReference type="HOGENOM" id="CLU_070101_2_0_1"/>
<dbReference type="InParanoid" id="O74988"/>
<dbReference type="OMA" id="WYISYGA"/>
<dbReference type="UniPathway" id="UPA00705"/>
<dbReference type="PRO" id="PR:O74988"/>
<dbReference type="Proteomes" id="UP000002485">
    <property type="component" value="Chromosome III"/>
</dbReference>
<dbReference type="GO" id="GO:0005743">
    <property type="term" value="C:mitochondrial inner membrane"/>
    <property type="evidence" value="ECO:0000305"/>
    <property type="project" value="PomBase"/>
</dbReference>
<dbReference type="GO" id="GO:0005739">
    <property type="term" value="C:mitochondrion"/>
    <property type="evidence" value="ECO:0007005"/>
    <property type="project" value="PomBase"/>
</dbReference>
<dbReference type="GO" id="GO:0045277">
    <property type="term" value="C:respiratory chain complex IV"/>
    <property type="evidence" value="ECO:0000314"/>
    <property type="project" value="PomBase"/>
</dbReference>
<dbReference type="GO" id="GO:0016491">
    <property type="term" value="F:oxidoreductase activity"/>
    <property type="evidence" value="ECO:0007669"/>
    <property type="project" value="UniProtKB-KW"/>
</dbReference>
<dbReference type="GO" id="GO:0006123">
    <property type="term" value="P:mitochondrial electron transport, cytochrome c to oxygen"/>
    <property type="evidence" value="ECO:0000318"/>
    <property type="project" value="GO_Central"/>
</dbReference>
<dbReference type="GO" id="GO:1902600">
    <property type="term" value="P:proton transmembrane transport"/>
    <property type="evidence" value="ECO:0007669"/>
    <property type="project" value="GOC"/>
</dbReference>
<dbReference type="CDD" id="cd00922">
    <property type="entry name" value="Cyt_c_Oxidase_IV"/>
    <property type="match status" value="1"/>
</dbReference>
<dbReference type="FunFam" id="1.10.442.10:FF:000002">
    <property type="entry name" value="Cytochrome c oxidase subunit V"/>
    <property type="match status" value="1"/>
</dbReference>
<dbReference type="Gene3D" id="1.10.442.10">
    <property type="entry name" value="Cytochrome c oxidase subunit IV"/>
    <property type="match status" value="1"/>
</dbReference>
<dbReference type="InterPro" id="IPR004203">
    <property type="entry name" value="Cyt_c_oxidase_su4_fam"/>
</dbReference>
<dbReference type="InterPro" id="IPR036639">
    <property type="entry name" value="Cyt_c_oxidase_su4_sf"/>
</dbReference>
<dbReference type="PANTHER" id="PTHR10707:SF10">
    <property type="entry name" value="CYTOCHROME C OXIDASE SUBUNIT 4"/>
    <property type="match status" value="1"/>
</dbReference>
<dbReference type="PANTHER" id="PTHR10707">
    <property type="entry name" value="CYTOCHROME C OXIDASE SUBUNIT IV"/>
    <property type="match status" value="1"/>
</dbReference>
<dbReference type="Pfam" id="PF02936">
    <property type="entry name" value="COX4"/>
    <property type="match status" value="1"/>
</dbReference>
<dbReference type="SUPFAM" id="SSF81406">
    <property type="entry name" value="Mitochondrial cytochrome c oxidase subunit IV"/>
    <property type="match status" value="1"/>
</dbReference>
<protein>
    <recommendedName>
        <fullName>Cytochrome c oxidase polypeptide 5, mitochondrial</fullName>
    </recommendedName>
    <alternativeName>
        <fullName>Cytochrome c oxidase polypeptide V</fullName>
    </alternativeName>
</protein>